<name>RAD55_SCHPO</name>
<feature type="chain" id="PRO_0000122955" description="DNA repair protein rhp55">
    <location>
        <begin position="1"/>
        <end position="350"/>
    </location>
</feature>
<feature type="region of interest" description="Disordered" evidence="2">
    <location>
        <begin position="331"/>
        <end position="350"/>
    </location>
</feature>
<feature type="binding site" evidence="1">
    <location>
        <begin position="51"/>
        <end position="58"/>
    </location>
    <ligand>
        <name>ATP</name>
        <dbReference type="ChEBI" id="CHEBI:30616"/>
    </ligand>
</feature>
<gene>
    <name type="primary">rhp55</name>
    <name type="ORF">SPAC3C7.03c</name>
</gene>
<evidence type="ECO:0000255" key="1"/>
<evidence type="ECO:0000256" key="2">
    <source>
        <dbReference type="SAM" id="MobiDB-lite"/>
    </source>
</evidence>
<evidence type="ECO:0000269" key="3">
    <source>
    </source>
</evidence>
<evidence type="ECO:0000305" key="4"/>
<sequence>MLSSQHRLVTQPAIRAYEAFSAPGFGFNSKLLDDAFGGSGLKRGYISEVCGAPGMGKTSLALQITANALLSGSRVIWVETCQPIPMERLRQLLDNHVPSSQDEEEKCDTDELLNLLDVVYAPNLVNILAFLRNFDQEKHLKEIGLLIIDNLSMPIQLAYPTSPEDYAYLRLRRNTSKKSSLSDSSQKENTLTLNKENEFSSKDDSNFAFHNSSTKTTINRRKKAIGTISSLLSKITSSCYVAIFVTTQMTSKVVSGIGAKLIPLLSTNWLDNLSYRLILYSRHSTEESKDGQSRPSHQLLRYAFMAKQPPAHSAESELAFQLTSTGIQDYQSIPTNSSQRRKRSILECES</sequence>
<protein>
    <recommendedName>
        <fullName>DNA repair protein rhp55</fullName>
    </recommendedName>
    <alternativeName>
        <fullName>RAD55 homolog</fullName>
    </alternativeName>
</protein>
<accession>O14129</accession>
<keyword id="KW-0067">ATP-binding</keyword>
<keyword id="KW-0227">DNA damage</keyword>
<keyword id="KW-0234">DNA repair</keyword>
<keyword id="KW-0547">Nucleotide-binding</keyword>
<keyword id="KW-0539">Nucleus</keyword>
<keyword id="KW-1185">Reference proteome</keyword>
<organism>
    <name type="scientific">Schizosaccharomyces pombe (strain 972 / ATCC 24843)</name>
    <name type="common">Fission yeast</name>
    <dbReference type="NCBI Taxonomy" id="284812"/>
    <lineage>
        <taxon>Eukaryota</taxon>
        <taxon>Fungi</taxon>
        <taxon>Dikarya</taxon>
        <taxon>Ascomycota</taxon>
        <taxon>Taphrinomycotina</taxon>
        <taxon>Schizosaccharomycetes</taxon>
        <taxon>Schizosaccharomycetales</taxon>
        <taxon>Schizosaccharomycetaceae</taxon>
        <taxon>Schizosaccharomyces</taxon>
    </lineage>
</organism>
<proteinExistence type="evidence at protein level"/>
<comment type="function">
    <text evidence="3">Required for radiation resistance and meiotic viability and acts in recombination and recombinational DNA repair pathways.</text>
</comment>
<comment type="interaction">
    <interactant intactId="EBI-1996748">
        <id>O14129</id>
    </interactant>
    <interactant intactId="EBI-1996765">
        <id>Q9UUL2</id>
        <label>rhp57</label>
    </interactant>
    <organismsDiffer>false</organismsDiffer>
    <experiments>4</experiments>
</comment>
<comment type="subcellular location">
    <subcellularLocation>
        <location evidence="4">Nucleus</location>
    </subcellularLocation>
</comment>
<comment type="similarity">
    <text evidence="4">Belongs to the RecA family. RAD55 subfamily.</text>
</comment>
<reference key="1">
    <citation type="journal article" date="1999" name="Genetics">
        <title>A new recombinational DNA repair gene from Schizosaccharomyces pombe with homology to Escherichia coli RecA.</title>
        <authorList>
            <person name="Khasanov F.K."/>
            <person name="Savchenko G.V."/>
            <person name="Bashkirova E.V."/>
            <person name="Korolev V.G."/>
            <person name="Heyer W.-D."/>
            <person name="Bashkirov V.I."/>
        </authorList>
    </citation>
    <scope>NUCLEOTIDE SEQUENCE [MRNA]</scope>
    <scope>FUNCTION</scope>
</reference>
<reference key="2">
    <citation type="journal article" date="2002" name="Nature">
        <title>The genome sequence of Schizosaccharomyces pombe.</title>
        <authorList>
            <person name="Wood V."/>
            <person name="Gwilliam R."/>
            <person name="Rajandream M.A."/>
            <person name="Lyne M.H."/>
            <person name="Lyne R."/>
            <person name="Stewart A."/>
            <person name="Sgouros J.G."/>
            <person name="Peat N."/>
            <person name="Hayles J."/>
            <person name="Baker S.G."/>
            <person name="Basham D."/>
            <person name="Bowman S."/>
            <person name="Brooks K."/>
            <person name="Brown D."/>
            <person name="Brown S."/>
            <person name="Chillingworth T."/>
            <person name="Churcher C.M."/>
            <person name="Collins M."/>
            <person name="Connor R."/>
            <person name="Cronin A."/>
            <person name="Davis P."/>
            <person name="Feltwell T."/>
            <person name="Fraser A."/>
            <person name="Gentles S."/>
            <person name="Goble A."/>
            <person name="Hamlin N."/>
            <person name="Harris D.E."/>
            <person name="Hidalgo J."/>
            <person name="Hodgson G."/>
            <person name="Holroyd S."/>
            <person name="Hornsby T."/>
            <person name="Howarth S."/>
            <person name="Huckle E.J."/>
            <person name="Hunt S."/>
            <person name="Jagels K."/>
            <person name="James K.D."/>
            <person name="Jones L."/>
            <person name="Jones M."/>
            <person name="Leather S."/>
            <person name="McDonald S."/>
            <person name="McLean J."/>
            <person name="Mooney P."/>
            <person name="Moule S."/>
            <person name="Mungall K.L."/>
            <person name="Murphy L.D."/>
            <person name="Niblett D."/>
            <person name="Odell C."/>
            <person name="Oliver K."/>
            <person name="O'Neil S."/>
            <person name="Pearson D."/>
            <person name="Quail M.A."/>
            <person name="Rabbinowitsch E."/>
            <person name="Rutherford K.M."/>
            <person name="Rutter S."/>
            <person name="Saunders D."/>
            <person name="Seeger K."/>
            <person name="Sharp S."/>
            <person name="Skelton J."/>
            <person name="Simmonds M.N."/>
            <person name="Squares R."/>
            <person name="Squares S."/>
            <person name="Stevens K."/>
            <person name="Taylor K."/>
            <person name="Taylor R.G."/>
            <person name="Tivey A."/>
            <person name="Walsh S.V."/>
            <person name="Warren T."/>
            <person name="Whitehead S."/>
            <person name="Woodward J.R."/>
            <person name="Volckaert G."/>
            <person name="Aert R."/>
            <person name="Robben J."/>
            <person name="Grymonprez B."/>
            <person name="Weltjens I."/>
            <person name="Vanstreels E."/>
            <person name="Rieger M."/>
            <person name="Schaefer M."/>
            <person name="Mueller-Auer S."/>
            <person name="Gabel C."/>
            <person name="Fuchs M."/>
            <person name="Duesterhoeft A."/>
            <person name="Fritzc C."/>
            <person name="Holzer E."/>
            <person name="Moestl D."/>
            <person name="Hilbert H."/>
            <person name="Borzym K."/>
            <person name="Langer I."/>
            <person name="Beck A."/>
            <person name="Lehrach H."/>
            <person name="Reinhardt R."/>
            <person name="Pohl T.M."/>
            <person name="Eger P."/>
            <person name="Zimmermann W."/>
            <person name="Wedler H."/>
            <person name="Wambutt R."/>
            <person name="Purnelle B."/>
            <person name="Goffeau A."/>
            <person name="Cadieu E."/>
            <person name="Dreano S."/>
            <person name="Gloux S."/>
            <person name="Lelaure V."/>
            <person name="Mottier S."/>
            <person name="Galibert F."/>
            <person name="Aves S.J."/>
            <person name="Xiang Z."/>
            <person name="Hunt C."/>
            <person name="Moore K."/>
            <person name="Hurst S.M."/>
            <person name="Lucas M."/>
            <person name="Rochet M."/>
            <person name="Gaillardin C."/>
            <person name="Tallada V.A."/>
            <person name="Garzon A."/>
            <person name="Thode G."/>
            <person name="Daga R.R."/>
            <person name="Cruzado L."/>
            <person name="Jimenez J."/>
            <person name="Sanchez M."/>
            <person name="del Rey F."/>
            <person name="Benito J."/>
            <person name="Dominguez A."/>
            <person name="Revuelta J.L."/>
            <person name="Moreno S."/>
            <person name="Armstrong J."/>
            <person name="Forsburg S.L."/>
            <person name="Cerutti L."/>
            <person name="Lowe T."/>
            <person name="McCombie W.R."/>
            <person name="Paulsen I."/>
            <person name="Potashkin J."/>
            <person name="Shpakovski G.V."/>
            <person name="Ussery D."/>
            <person name="Barrell B.G."/>
            <person name="Nurse P."/>
        </authorList>
    </citation>
    <scope>NUCLEOTIDE SEQUENCE [LARGE SCALE GENOMIC DNA]</scope>
    <source>
        <strain>972 / ATCC 24843</strain>
    </source>
</reference>
<dbReference type="EMBL" id="AF053410">
    <property type="protein sequence ID" value="AAC17871.1"/>
    <property type="molecule type" value="mRNA"/>
</dbReference>
<dbReference type="EMBL" id="CU329670">
    <property type="protein sequence ID" value="CAB16734.1"/>
    <property type="molecule type" value="Genomic_DNA"/>
</dbReference>
<dbReference type="PIR" id="T43680">
    <property type="entry name" value="T43680"/>
</dbReference>
<dbReference type="RefSeq" id="NP_593604.1">
    <property type="nucleotide sequence ID" value="NM_001019035.2"/>
</dbReference>
<dbReference type="SMR" id="O14129"/>
<dbReference type="BioGRID" id="280099">
    <property type="interactions" value="180"/>
</dbReference>
<dbReference type="FunCoup" id="O14129">
    <property type="interactions" value="2"/>
</dbReference>
<dbReference type="IntAct" id="O14129">
    <property type="interactions" value="2"/>
</dbReference>
<dbReference type="STRING" id="284812.O14129"/>
<dbReference type="iPTMnet" id="O14129"/>
<dbReference type="PaxDb" id="4896-SPAC3C7.03c.1"/>
<dbReference type="EnsemblFungi" id="SPAC3C7.03c.1">
    <property type="protein sequence ID" value="SPAC3C7.03c.1:pep"/>
    <property type="gene ID" value="SPAC3C7.03c"/>
</dbReference>
<dbReference type="GeneID" id="2543685"/>
<dbReference type="KEGG" id="spo:2543685"/>
<dbReference type="PomBase" id="SPAC3C7.03c"/>
<dbReference type="VEuPathDB" id="FungiDB:SPAC3C7.03c"/>
<dbReference type="eggNOG" id="KOG1433">
    <property type="taxonomic scope" value="Eukaryota"/>
</dbReference>
<dbReference type="HOGENOM" id="CLU_792632_0_0_1"/>
<dbReference type="InParanoid" id="O14129"/>
<dbReference type="OMA" id="TQMTSKV"/>
<dbReference type="PhylomeDB" id="O14129"/>
<dbReference type="PRO" id="PR:O14129"/>
<dbReference type="Proteomes" id="UP000002485">
    <property type="component" value="Chromosome I"/>
</dbReference>
<dbReference type="GO" id="GO:0005829">
    <property type="term" value="C:cytosol"/>
    <property type="evidence" value="ECO:0007005"/>
    <property type="project" value="PomBase"/>
</dbReference>
<dbReference type="GO" id="GO:0005634">
    <property type="term" value="C:nucleus"/>
    <property type="evidence" value="ECO:0007005"/>
    <property type="project" value="PomBase"/>
</dbReference>
<dbReference type="GO" id="GO:0033063">
    <property type="term" value="C:Rad51B-Rad51C-Rad51D-XRCC2 complex"/>
    <property type="evidence" value="ECO:0000318"/>
    <property type="project" value="GO_Central"/>
</dbReference>
<dbReference type="GO" id="GO:0033065">
    <property type="term" value="C:Rad51C-XRCC3 complex"/>
    <property type="evidence" value="ECO:0000318"/>
    <property type="project" value="GO_Central"/>
</dbReference>
<dbReference type="GO" id="GO:0005657">
    <property type="term" value="C:replication fork"/>
    <property type="evidence" value="ECO:0000318"/>
    <property type="project" value="GO_Central"/>
</dbReference>
<dbReference type="GO" id="GO:0035861">
    <property type="term" value="C:site of double-strand break"/>
    <property type="evidence" value="ECO:0000314"/>
    <property type="project" value="PomBase"/>
</dbReference>
<dbReference type="GO" id="GO:0005524">
    <property type="term" value="F:ATP binding"/>
    <property type="evidence" value="ECO:0000255"/>
    <property type="project" value="PomBase"/>
</dbReference>
<dbReference type="GO" id="GO:0016887">
    <property type="term" value="F:ATP hydrolysis activity"/>
    <property type="evidence" value="ECO:0000303"/>
    <property type="project" value="PomBase"/>
</dbReference>
<dbReference type="GO" id="GO:0140664">
    <property type="term" value="F:ATP-dependent DNA damage sensor activity"/>
    <property type="evidence" value="ECO:0007669"/>
    <property type="project" value="InterPro"/>
</dbReference>
<dbReference type="GO" id="GO:0003677">
    <property type="term" value="F:DNA binding"/>
    <property type="evidence" value="ECO:0007669"/>
    <property type="project" value="InterPro"/>
</dbReference>
<dbReference type="GO" id="GO:0006974">
    <property type="term" value="P:DNA damage response"/>
    <property type="evidence" value="ECO:0000315"/>
    <property type="project" value="PomBase"/>
</dbReference>
<dbReference type="GO" id="GO:0042148">
    <property type="term" value="P:DNA strand invasion"/>
    <property type="evidence" value="ECO:0000304"/>
    <property type="project" value="PomBase"/>
</dbReference>
<dbReference type="GO" id="GO:0000724">
    <property type="term" value="P:double-strand break repair via homologous recombination"/>
    <property type="evidence" value="ECO:0000315"/>
    <property type="project" value="PomBase"/>
</dbReference>
<dbReference type="GO" id="GO:0000707">
    <property type="term" value="P:meiotic DNA recombinase assembly"/>
    <property type="evidence" value="ECO:0000318"/>
    <property type="project" value="GO_Central"/>
</dbReference>
<dbReference type="GO" id="GO:0000709">
    <property type="term" value="P:meiotic joint molecule formation"/>
    <property type="evidence" value="ECO:0000304"/>
    <property type="project" value="PomBase"/>
</dbReference>
<dbReference type="GO" id="GO:0007131">
    <property type="term" value="P:reciprocal meiotic recombination"/>
    <property type="evidence" value="ECO:0000315"/>
    <property type="project" value="PomBase"/>
</dbReference>
<dbReference type="Gene3D" id="3.40.50.300">
    <property type="entry name" value="P-loop containing nucleotide triphosphate hydrolases"/>
    <property type="match status" value="1"/>
</dbReference>
<dbReference type="InterPro" id="IPR052093">
    <property type="entry name" value="HR_Repair_Mediator"/>
</dbReference>
<dbReference type="InterPro" id="IPR027417">
    <property type="entry name" value="P-loop_NTPase"/>
</dbReference>
<dbReference type="InterPro" id="IPR020588">
    <property type="entry name" value="RecA_ATP-bd"/>
</dbReference>
<dbReference type="PANTHER" id="PTHR46239:SF1">
    <property type="entry name" value="DNA REPAIR PROTEIN RAD51 HOMOLOG 3"/>
    <property type="match status" value="1"/>
</dbReference>
<dbReference type="PANTHER" id="PTHR46239">
    <property type="entry name" value="DNA REPAIR PROTEIN RAD51 HOMOLOG 3 RAD51C"/>
    <property type="match status" value="1"/>
</dbReference>
<dbReference type="SUPFAM" id="SSF52540">
    <property type="entry name" value="P-loop containing nucleoside triphosphate hydrolases"/>
    <property type="match status" value="1"/>
</dbReference>
<dbReference type="PROSITE" id="PS50162">
    <property type="entry name" value="RECA_2"/>
    <property type="match status" value="1"/>
</dbReference>